<keyword id="KW-0007">Acetylation</keyword>
<keyword id="KW-0021">Allosteric enzyme</keyword>
<keyword id="KW-0119">Carbohydrate metabolism</keyword>
<keyword id="KW-0903">Direct protein sequencing</keyword>
<keyword id="KW-0520">NAD</keyword>
<keyword id="KW-0560">Oxidoreductase</keyword>
<keyword id="KW-0597">Phosphoprotein</keyword>
<keyword id="KW-1185">Reference proteome</keyword>
<gene>
    <name type="primary">UGDH</name>
</gene>
<reference key="1">
    <citation type="journal article" date="1999" name="Glycobiology">
        <title>cDNA cloning and expression of UDP-glucose dehydrogenase from bovine kidney.</title>
        <authorList>
            <person name="Lind T."/>
            <person name="Falk E."/>
            <person name="Hjertson E."/>
            <person name="Kusche-Gullberg M."/>
            <person name="Lidholt K."/>
        </authorList>
    </citation>
    <scope>NUCLEOTIDE SEQUENCE [MRNA]</scope>
    <source>
        <tissue>Kidney</tissue>
    </source>
</reference>
<reference key="2">
    <citation type="submission" date="2007-07" db="EMBL/GenBank/DDBJ databases">
        <authorList>
            <consortium name="NIH - Mammalian Gene Collection (MGC) project"/>
        </authorList>
    </citation>
    <scope>NUCLEOTIDE SEQUENCE [LARGE SCALE MRNA]</scope>
    <source>
        <strain>Hereford</strain>
        <tissue>Ascending colon</tissue>
    </source>
</reference>
<reference key="3">
    <citation type="journal article" date="1994" name="Protein Sci.">
        <title>UDP-glucose dehydrogenase from bovine liver: primary structure and relationship to other dehydrogenases.</title>
        <authorList>
            <person name="Hempel J."/>
            <person name="Perozich J."/>
            <person name="Romovacek H."/>
            <person name="Hinich A."/>
            <person name="Kuo I."/>
            <person name="Feingold D.S."/>
        </authorList>
    </citation>
    <scope>PROTEIN SEQUENCE OF 1-469</scope>
    <source>
        <tissue>Liver</tissue>
    </source>
</reference>
<reference key="4">
    <citation type="journal article" date="1981" name="Biochem. J.">
        <title>Amino acid sequence of the tryptic peptide containing the catalytic-site thiol group of bovine liver uridine diphosphate glucose dehydrogenase.</title>
        <authorList>
            <person name="Franzen B."/>
            <person name="Carrubba C."/>
            <person name="Feingold D.S."/>
            <person name="Ashcom J."/>
            <person name="Franzen J.S."/>
        </authorList>
    </citation>
    <scope>PROTEIN SEQUENCE OF 268-281</scope>
    <source>
        <tissue>Liver</tissue>
    </source>
</reference>
<evidence type="ECO:0000250" key="1">
    <source>
        <dbReference type="UniProtKB" id="O60701"/>
    </source>
</evidence>
<evidence type="ECO:0000250" key="2">
    <source>
        <dbReference type="UniProtKB" id="O70475"/>
    </source>
</evidence>
<evidence type="ECO:0000305" key="3"/>
<feature type="chain" id="PRO_0000074059" description="UDP-glucose 6-dehydrogenase">
    <location>
        <begin position="1"/>
        <end position="494"/>
    </location>
</feature>
<feature type="region of interest" description="Disordered" evidence="1">
    <location>
        <begin position="88"/>
        <end position="110"/>
    </location>
</feature>
<feature type="region of interest" description="Allosteric switch region" evidence="1">
    <location>
        <begin position="129"/>
        <end position="135"/>
    </location>
</feature>
<feature type="region of interest" description="Important for formation of active hexamer structure" evidence="1">
    <location>
        <begin position="321"/>
        <end position="325"/>
    </location>
</feature>
<feature type="region of interest" description="Disordered" evidence="1">
    <location>
        <begin position="466"/>
        <end position="494"/>
    </location>
</feature>
<feature type="active site" description="Proton donor/acceptor" evidence="1">
    <location>
        <position position="161"/>
    </location>
</feature>
<feature type="active site" description="Proton donor/acceptor" evidence="1">
    <location>
        <position position="220"/>
    </location>
</feature>
<feature type="active site" description="Nucleophile" evidence="1">
    <location>
        <position position="276"/>
    </location>
</feature>
<feature type="binding site" evidence="1">
    <location>
        <begin position="11"/>
        <end position="16"/>
    </location>
    <ligand>
        <name>NAD(+)</name>
        <dbReference type="ChEBI" id="CHEBI:57540"/>
    </ligand>
</feature>
<feature type="binding site" evidence="1">
    <location>
        <position position="36"/>
    </location>
    <ligand>
        <name>NAD(+)</name>
        <dbReference type="ChEBI" id="CHEBI:57540"/>
    </ligand>
</feature>
<feature type="binding site" evidence="1">
    <location>
        <position position="41"/>
    </location>
    <ligand>
        <name>NAD(+)</name>
        <dbReference type="ChEBI" id="CHEBI:57540"/>
    </ligand>
</feature>
<feature type="binding site" evidence="1">
    <location>
        <begin position="89"/>
        <end position="93"/>
    </location>
    <ligand>
        <name>NAD(+)</name>
        <dbReference type="ChEBI" id="CHEBI:57540"/>
    </ligand>
</feature>
<feature type="binding site" evidence="1">
    <location>
        <begin position="130"/>
        <end position="132"/>
    </location>
    <ligand>
        <name>NAD(+)</name>
        <dbReference type="ChEBI" id="CHEBI:57540"/>
    </ligand>
</feature>
<feature type="binding site" evidence="1">
    <location>
        <begin position="161"/>
        <end position="165"/>
    </location>
    <ligand>
        <name>substrate</name>
    </ligand>
</feature>
<feature type="binding site" evidence="1">
    <location>
        <position position="165"/>
    </location>
    <ligand>
        <name>NAD(+)</name>
        <dbReference type="ChEBI" id="CHEBI:57540"/>
    </ligand>
</feature>
<feature type="binding site" evidence="1">
    <location>
        <begin position="220"/>
        <end position="224"/>
    </location>
    <ligand>
        <name>substrate</name>
    </ligand>
</feature>
<feature type="binding site" evidence="1">
    <location>
        <position position="260"/>
    </location>
    <ligand>
        <name>substrate</name>
    </ligand>
</feature>
<feature type="binding site" evidence="1">
    <location>
        <begin position="267"/>
        <end position="273"/>
    </location>
    <ligand>
        <name>substrate</name>
    </ligand>
</feature>
<feature type="binding site" evidence="1">
    <location>
        <begin position="276"/>
        <end position="279"/>
    </location>
    <ligand>
        <name>NAD(+)</name>
        <dbReference type="ChEBI" id="CHEBI:57540"/>
    </ligand>
</feature>
<feature type="binding site" evidence="1">
    <location>
        <begin position="338"/>
        <end position="339"/>
    </location>
    <ligand>
        <name>substrate</name>
    </ligand>
</feature>
<feature type="binding site" evidence="1">
    <location>
        <position position="346"/>
    </location>
    <ligand>
        <name>NAD(+)</name>
        <dbReference type="ChEBI" id="CHEBI:57540"/>
    </ligand>
</feature>
<feature type="binding site" evidence="1">
    <location>
        <position position="442"/>
    </location>
    <ligand>
        <name>substrate</name>
    </ligand>
</feature>
<feature type="modified residue" description="N6-acetyllysine" evidence="1">
    <location>
        <position position="107"/>
    </location>
</feature>
<feature type="modified residue" description="Phosphoserine" evidence="1">
    <location>
        <position position="476"/>
    </location>
</feature>
<feature type="sequence conflict" description="In Ref. 3; AA sequence." evidence="3" ref="3">
    <location>
        <position position="157"/>
    </location>
</feature>
<feature type="sequence conflict" description="In Ref. 4; AA sequence." evidence="3" ref="4">
    <original>QKDV</original>
    <variation>ZZGK</variation>
    <location>
        <begin position="278"/>
        <end position="281"/>
    </location>
</feature>
<accession>P12378</accession>
<accession>A6QR10</accession>
<accession>O77806</accession>
<dbReference type="EC" id="1.1.1.22" evidence="1"/>
<dbReference type="EMBL" id="AF095792">
    <property type="protein sequence ID" value="AAC64183.1"/>
    <property type="molecule type" value="mRNA"/>
</dbReference>
<dbReference type="EMBL" id="BC150068">
    <property type="protein sequence ID" value="AAI50069.1"/>
    <property type="molecule type" value="mRNA"/>
</dbReference>
<dbReference type="PIR" id="A17150">
    <property type="entry name" value="A17150"/>
</dbReference>
<dbReference type="RefSeq" id="NP_776636.1">
    <property type="nucleotide sequence ID" value="NM_174211.3"/>
</dbReference>
<dbReference type="RefSeq" id="XP_005207890.1">
    <property type="nucleotide sequence ID" value="XM_005207833.4"/>
</dbReference>
<dbReference type="SMR" id="P12378"/>
<dbReference type="FunCoup" id="P12378">
    <property type="interactions" value="1864"/>
</dbReference>
<dbReference type="STRING" id="9913.ENSBTAP00000019302"/>
<dbReference type="PaxDb" id="9913-ENSBTAP00000019302"/>
<dbReference type="PeptideAtlas" id="P12378"/>
<dbReference type="Ensembl" id="ENSBTAT00000019302.6">
    <property type="protein sequence ID" value="ENSBTAP00000019302.4"/>
    <property type="gene ID" value="ENSBTAG00000014521.6"/>
</dbReference>
<dbReference type="GeneID" id="281564"/>
<dbReference type="KEGG" id="bta:281564"/>
<dbReference type="CTD" id="7358"/>
<dbReference type="VEuPathDB" id="HostDB:ENSBTAG00000014521"/>
<dbReference type="VGNC" id="VGNC:36648">
    <property type="gene designation" value="UGDH"/>
</dbReference>
<dbReference type="eggNOG" id="KOG2666">
    <property type="taxonomic scope" value="Eukaryota"/>
</dbReference>
<dbReference type="GeneTree" id="ENSGT00390000015355"/>
<dbReference type="HOGENOM" id="CLU_023810_7_0_1"/>
<dbReference type="InParanoid" id="P12378"/>
<dbReference type="OMA" id="CFIAVGT"/>
<dbReference type="OrthoDB" id="5059218at2759"/>
<dbReference type="TreeFam" id="TF105671"/>
<dbReference type="Reactome" id="R-BTA-173599">
    <property type="pathway name" value="Formation of the active cofactor, UDP-glucuronate"/>
</dbReference>
<dbReference type="UniPathway" id="UPA00038">
    <property type="reaction ID" value="UER00491"/>
</dbReference>
<dbReference type="Proteomes" id="UP000009136">
    <property type="component" value="Chromosome 6"/>
</dbReference>
<dbReference type="Bgee" id="ENSBTAG00000014521">
    <property type="expression patterns" value="Expressed in liver and 105 other cell types or tissues"/>
</dbReference>
<dbReference type="GO" id="GO:0005654">
    <property type="term" value="C:nucleoplasm"/>
    <property type="evidence" value="ECO:0007669"/>
    <property type="project" value="Ensembl"/>
</dbReference>
<dbReference type="GO" id="GO:0005634">
    <property type="term" value="C:nucleus"/>
    <property type="evidence" value="ECO:0000318"/>
    <property type="project" value="GO_Central"/>
</dbReference>
<dbReference type="GO" id="GO:0042802">
    <property type="term" value="F:identical protein binding"/>
    <property type="evidence" value="ECO:0007669"/>
    <property type="project" value="Ensembl"/>
</dbReference>
<dbReference type="GO" id="GO:0051287">
    <property type="term" value="F:NAD binding"/>
    <property type="evidence" value="ECO:0007669"/>
    <property type="project" value="InterPro"/>
</dbReference>
<dbReference type="GO" id="GO:0003979">
    <property type="term" value="F:UDP-glucose 6-dehydrogenase activity"/>
    <property type="evidence" value="ECO:0000250"/>
    <property type="project" value="UniProtKB"/>
</dbReference>
<dbReference type="GO" id="GO:0050650">
    <property type="term" value="P:chondroitin sulfate proteoglycan biosynthetic process"/>
    <property type="evidence" value="ECO:0000250"/>
    <property type="project" value="UniProtKB"/>
</dbReference>
<dbReference type="GO" id="GO:0001702">
    <property type="term" value="P:gastrulation with mouth forming second"/>
    <property type="evidence" value="ECO:0000250"/>
    <property type="project" value="AgBase"/>
</dbReference>
<dbReference type="GO" id="GO:0006024">
    <property type="term" value="P:glycosaminoglycan biosynthetic process"/>
    <property type="evidence" value="ECO:0000318"/>
    <property type="project" value="GO_Central"/>
</dbReference>
<dbReference type="GO" id="GO:0015012">
    <property type="term" value="P:heparan sulfate proteoglycan biosynthetic process"/>
    <property type="evidence" value="ECO:0000250"/>
    <property type="project" value="UniProtKB"/>
</dbReference>
<dbReference type="GO" id="GO:0048666">
    <property type="term" value="P:neuron development"/>
    <property type="evidence" value="ECO:0000250"/>
    <property type="project" value="UniProtKB"/>
</dbReference>
<dbReference type="GO" id="GO:0034214">
    <property type="term" value="P:protein hexamerization"/>
    <property type="evidence" value="ECO:0000250"/>
    <property type="project" value="UniProtKB"/>
</dbReference>
<dbReference type="GO" id="GO:0006065">
    <property type="term" value="P:UDP-glucuronate biosynthetic process"/>
    <property type="evidence" value="ECO:0000250"/>
    <property type="project" value="UniProtKB"/>
</dbReference>
<dbReference type="FunFam" id="1.20.5.100:FF:000001">
    <property type="entry name" value="UDP-glucose 6-dehydrogenase"/>
    <property type="match status" value="1"/>
</dbReference>
<dbReference type="FunFam" id="3.40.50.720:FF:000032">
    <property type="entry name" value="UDP-glucose 6-dehydrogenase"/>
    <property type="match status" value="1"/>
</dbReference>
<dbReference type="FunFam" id="3.40.50.720:FF:000114">
    <property type="entry name" value="UDP-glucose 6-dehydrogenase"/>
    <property type="match status" value="1"/>
</dbReference>
<dbReference type="Gene3D" id="1.20.5.100">
    <property type="entry name" value="Cytochrome c1, transmembrane anchor, C-terminal"/>
    <property type="match status" value="1"/>
</dbReference>
<dbReference type="Gene3D" id="3.40.50.720">
    <property type="entry name" value="NAD(P)-binding Rossmann-like Domain"/>
    <property type="match status" value="2"/>
</dbReference>
<dbReference type="InterPro" id="IPR008927">
    <property type="entry name" value="6-PGluconate_DH-like_C_sf"/>
</dbReference>
<dbReference type="InterPro" id="IPR036291">
    <property type="entry name" value="NAD(P)-bd_dom_sf"/>
</dbReference>
<dbReference type="InterPro" id="IPR017476">
    <property type="entry name" value="UDP-Glc/GDP-Man"/>
</dbReference>
<dbReference type="InterPro" id="IPR014027">
    <property type="entry name" value="UDP-Glc/GDP-Man_DH_C"/>
</dbReference>
<dbReference type="InterPro" id="IPR036220">
    <property type="entry name" value="UDP-Glc/GDP-Man_DH_C_sf"/>
</dbReference>
<dbReference type="InterPro" id="IPR014026">
    <property type="entry name" value="UDP-Glc/GDP-Man_DH_dimer"/>
</dbReference>
<dbReference type="InterPro" id="IPR001732">
    <property type="entry name" value="UDP-Glc/GDP-Man_DH_N"/>
</dbReference>
<dbReference type="InterPro" id="IPR028356">
    <property type="entry name" value="UDPglc_DH_euk"/>
</dbReference>
<dbReference type="NCBIfam" id="TIGR03026">
    <property type="entry name" value="NDP-sugDHase"/>
    <property type="match status" value="1"/>
</dbReference>
<dbReference type="PANTHER" id="PTHR11374:SF59">
    <property type="entry name" value="UDP-GLUCOSE 6-DEHYDROGENASE"/>
    <property type="match status" value="1"/>
</dbReference>
<dbReference type="PANTHER" id="PTHR11374">
    <property type="entry name" value="UDP-GLUCOSE DEHYDROGENASE/UDP-MANNAC DEHYDROGENASE"/>
    <property type="match status" value="1"/>
</dbReference>
<dbReference type="Pfam" id="PF00984">
    <property type="entry name" value="UDPG_MGDP_dh"/>
    <property type="match status" value="1"/>
</dbReference>
<dbReference type="Pfam" id="PF03720">
    <property type="entry name" value="UDPG_MGDP_dh_C"/>
    <property type="match status" value="1"/>
</dbReference>
<dbReference type="Pfam" id="PF03721">
    <property type="entry name" value="UDPG_MGDP_dh_N"/>
    <property type="match status" value="1"/>
</dbReference>
<dbReference type="PIRSF" id="PIRSF500133">
    <property type="entry name" value="UDPglc_DH_euk"/>
    <property type="match status" value="1"/>
</dbReference>
<dbReference type="PIRSF" id="PIRSF000124">
    <property type="entry name" value="UDPglc_GDPman_dh"/>
    <property type="match status" value="1"/>
</dbReference>
<dbReference type="SMART" id="SM00984">
    <property type="entry name" value="UDPG_MGDP_dh_C"/>
    <property type="match status" value="1"/>
</dbReference>
<dbReference type="SUPFAM" id="SSF48179">
    <property type="entry name" value="6-phosphogluconate dehydrogenase C-terminal domain-like"/>
    <property type="match status" value="1"/>
</dbReference>
<dbReference type="SUPFAM" id="SSF51735">
    <property type="entry name" value="NAD(P)-binding Rossmann-fold domains"/>
    <property type="match status" value="1"/>
</dbReference>
<dbReference type="SUPFAM" id="SSF52413">
    <property type="entry name" value="UDP-glucose/GDP-mannose dehydrogenase C-terminal domain"/>
    <property type="match status" value="1"/>
</dbReference>
<proteinExistence type="evidence at protein level"/>
<organism>
    <name type="scientific">Bos taurus</name>
    <name type="common">Bovine</name>
    <dbReference type="NCBI Taxonomy" id="9913"/>
    <lineage>
        <taxon>Eukaryota</taxon>
        <taxon>Metazoa</taxon>
        <taxon>Chordata</taxon>
        <taxon>Craniata</taxon>
        <taxon>Vertebrata</taxon>
        <taxon>Euteleostomi</taxon>
        <taxon>Mammalia</taxon>
        <taxon>Eutheria</taxon>
        <taxon>Laurasiatheria</taxon>
        <taxon>Artiodactyla</taxon>
        <taxon>Ruminantia</taxon>
        <taxon>Pecora</taxon>
        <taxon>Bovidae</taxon>
        <taxon>Bovinae</taxon>
        <taxon>Bos</taxon>
    </lineage>
</organism>
<protein>
    <recommendedName>
        <fullName>UDP-glucose 6-dehydrogenase</fullName>
        <shortName>UDP-Glc dehydrogenase</shortName>
        <shortName>UDP-GlcDH</shortName>
        <shortName>UDPGDH</shortName>
        <ecNumber evidence="1">1.1.1.22</ecNumber>
    </recommendedName>
</protein>
<sequence length="494" mass="55136">MFEIKKICCIGAGYVGGPTCSVIAHMCPEIRVTVVDINESRINAWNSPTLPIYEPGLKEVVESCRGKNLFFSTNIDDAIKEADLVFISVNTPTKTYGMGKGRAADLKYIEACARRIVQNSHGYKIVTEKSTVPVRAAESIRRIFDANTKPNLNLQVLSNPEFLAEGTAIKDLKNPDRVLIGGDETPEGQRAVQALCAVYEHWVPREKILTTNTWSSELSKLTANAFLAQRISSINSISALCEATGADVEEVATAIGMDQRIGNKFLKASVGFGGSCFQKDVLNLVYLCEALNLPEVARYWQQVIDMNDYQRRRFASRIIDSLFNTVTDKKIAILGFAFKKDTGDTRESSSIYISKYLMDEGAHLHIYDPKVPREQIVVDLSHPGVSKDDQVARLVTISKDPYEACDGAHAVVICTEWDMFKELDYERIHKKMLKPAFIFDGRRVLDGLHNELQTIGFQIETIGKKVSSKRIPYAPSGEIPKFSLQDMPNKKPRV</sequence>
<comment type="function">
    <text evidence="1 2">Catalyzes the formation of UDP-alpha-D-glucuronate, a constituent of complex glycosaminoglycans (By similarity). Required for the biosynthesis of chondroitin sulfate and heparan sulfate. Required for embryonic development via its role in the biosynthesis of glycosaminoglycans (By similarity). Required for proper brain and neuronal development (By similarity).</text>
</comment>
<comment type="catalytic activity">
    <reaction evidence="1">
        <text>UDP-alpha-D-glucose + 2 NAD(+) + H2O = UDP-alpha-D-glucuronate + 2 NADH + 3 H(+)</text>
        <dbReference type="Rhea" id="RHEA:23596"/>
        <dbReference type="ChEBI" id="CHEBI:15377"/>
        <dbReference type="ChEBI" id="CHEBI:15378"/>
        <dbReference type="ChEBI" id="CHEBI:57540"/>
        <dbReference type="ChEBI" id="CHEBI:57945"/>
        <dbReference type="ChEBI" id="CHEBI:58052"/>
        <dbReference type="ChEBI" id="CHEBI:58885"/>
        <dbReference type="EC" id="1.1.1.22"/>
    </reaction>
</comment>
<comment type="activity regulation">
    <text evidence="1">UDP-alpha-D-xylose (UDX) acts as a feedback inhibitor. It binds at the same site as the substrate, but functions as allosteric inhibitor by triggering a conformation change that disrupts the active hexameric ring structure and gives rise to an inactive, horseshoe-shaped hexamer.</text>
</comment>
<comment type="pathway">
    <text evidence="1">Nucleotide-sugar biosynthesis; UDP-alpha-D-glucuronate biosynthesis; UDP-alpha-D-glucuronate from UDP-alpha-D-glucose: step 1/1.</text>
</comment>
<comment type="subunit">
    <text evidence="1">Homohexamer.</text>
</comment>
<comment type="domain">
    <text evidence="1">The protein goes through several conformation states during the reaction cycle, giving rise to hysteresis. In the initial state, the ligand-free protein is in an inactive conformation (E*). Substrate binding triggers a change to the active conformation (E). UDP-xylose binding triggers the transition to a distinct, inhibited conformation. The presence of an intrinsically disordered C-terminus promotes a more dynamic protein structure and favors a conformation with high affinity for UPD-xylose.</text>
</comment>
<comment type="domain">
    <text evidence="1">The allosteric switch region moves by about 5 Angstroms when UDP-xylose is bound, and occupies part of the UDP-glucose binding site. At the same time it promotes domain movements that disrupt the active hexameric ring structure and lead to the formation of a horseshoe-shaped, inactive hexamer.</text>
</comment>
<comment type="similarity">
    <text evidence="3">Belongs to the UDP-glucose/GDP-mannose dehydrogenase family.</text>
</comment>
<name>UGDH_BOVIN</name>